<accession>Q6DEY3</accession>
<name>AB17B_XENTR</name>
<sequence>MNNLSFSELCCLFCCPPCPGKIASKLAFLPPDPTYTLICDESGSRWTLHLSERADWQYSSREKDAIECFMTRTSRGNRIACMFVRCSPNAKYTLLFSHGNAVDLGQMSSFYIGLGSRINCNIFSYDYSGYGSSSGKPSEKNLYADIDAAWIALRTRYGIRPEHVIIYGQSIGTVPSVDLAARYESAAVILHSPLTSGMRVAFPDTKKTYCFDAFPNIDKISKITSPVLIIHGTEDEVIDFSHGLALFERCQRPVEPLWVEGAGHNDVELYGQYLERLKQFVTQELVNL</sequence>
<dbReference type="EC" id="3.1.2.22" evidence="2"/>
<dbReference type="EMBL" id="BC076960">
    <property type="protein sequence ID" value="AAH76960.1"/>
    <property type="molecule type" value="mRNA"/>
</dbReference>
<dbReference type="RefSeq" id="NP_001005065.1">
    <property type="nucleotide sequence ID" value="NM_001005065.1"/>
</dbReference>
<dbReference type="SMR" id="Q6DEY3"/>
<dbReference type="FunCoup" id="Q6DEY3">
    <property type="interactions" value="1758"/>
</dbReference>
<dbReference type="STRING" id="8364.ENSXETP00000011923"/>
<dbReference type="ESTHER" id="xentr-q6dey3">
    <property type="family name" value="ABHD17-depalmitoylase"/>
</dbReference>
<dbReference type="MEROPS" id="S09.055"/>
<dbReference type="PaxDb" id="8364-ENSXETP00000057305"/>
<dbReference type="DNASU" id="448619"/>
<dbReference type="GeneID" id="448619"/>
<dbReference type="KEGG" id="xtr:448619"/>
<dbReference type="AGR" id="Xenbase:XB-GENE-962854"/>
<dbReference type="CTD" id="51104"/>
<dbReference type="Xenbase" id="XB-GENE-962854">
    <property type="gene designation" value="abhd17b"/>
</dbReference>
<dbReference type="eggNOG" id="KOG1552">
    <property type="taxonomic scope" value="Eukaryota"/>
</dbReference>
<dbReference type="HOGENOM" id="CLU_029375_5_4_1"/>
<dbReference type="InParanoid" id="Q6DEY3"/>
<dbReference type="OMA" id="GENIYML"/>
<dbReference type="OrthoDB" id="446723at2759"/>
<dbReference type="PhylomeDB" id="Q6DEY3"/>
<dbReference type="TreeFam" id="TF314365"/>
<dbReference type="Reactome" id="R-XTR-9648002">
    <property type="pathway name" value="RAS processing"/>
</dbReference>
<dbReference type="Proteomes" id="UP000008143">
    <property type="component" value="Chromosome 1"/>
</dbReference>
<dbReference type="Bgee" id="ENSXETG00000027472">
    <property type="expression patterns" value="Expressed in egg cell and 12 other cell types or tissues"/>
</dbReference>
<dbReference type="GO" id="GO:0043197">
    <property type="term" value="C:dendritic spine"/>
    <property type="evidence" value="ECO:0007669"/>
    <property type="project" value="UniProtKB-SubCell"/>
</dbReference>
<dbReference type="GO" id="GO:0098839">
    <property type="term" value="C:postsynaptic density membrane"/>
    <property type="evidence" value="ECO:0007669"/>
    <property type="project" value="UniProtKB-SubCell"/>
</dbReference>
<dbReference type="GO" id="GO:0055038">
    <property type="term" value="C:recycling endosome membrane"/>
    <property type="evidence" value="ECO:0007669"/>
    <property type="project" value="UniProtKB-SubCell"/>
</dbReference>
<dbReference type="GO" id="GO:0008474">
    <property type="term" value="F:palmitoyl-(protein) hydrolase activity"/>
    <property type="evidence" value="ECO:0007669"/>
    <property type="project" value="UniProtKB-EC"/>
</dbReference>
<dbReference type="FunFam" id="3.40.50.1820:FF:000008">
    <property type="entry name" value="Alpha/beta hydrolase domain-containing protein 17B"/>
    <property type="match status" value="1"/>
</dbReference>
<dbReference type="Gene3D" id="3.40.50.1820">
    <property type="entry name" value="alpha/beta hydrolase"/>
    <property type="match status" value="1"/>
</dbReference>
<dbReference type="InterPro" id="IPR029058">
    <property type="entry name" value="AB_hydrolase_fold"/>
</dbReference>
<dbReference type="InterPro" id="IPR022742">
    <property type="entry name" value="Hydrolase_4"/>
</dbReference>
<dbReference type="PANTHER" id="PTHR12277">
    <property type="entry name" value="ALPHA/BETA HYDROLASE DOMAIN-CONTAINING PROTEIN"/>
    <property type="match status" value="1"/>
</dbReference>
<dbReference type="PANTHER" id="PTHR12277:SF48">
    <property type="entry name" value="ALPHA_BETA HYDROLASE DOMAIN-CONTAINING PROTEIN 17B"/>
    <property type="match status" value="1"/>
</dbReference>
<dbReference type="Pfam" id="PF12146">
    <property type="entry name" value="Hydrolase_4"/>
    <property type="match status" value="1"/>
</dbReference>
<dbReference type="SUPFAM" id="SSF53474">
    <property type="entry name" value="alpha/beta-Hydrolases"/>
    <property type="match status" value="1"/>
</dbReference>
<reference key="1">
    <citation type="submission" date="2004-07" db="EMBL/GenBank/DDBJ databases">
        <authorList>
            <consortium name="NIH - Xenopus Gene Collection (XGC) project"/>
        </authorList>
    </citation>
    <scope>NUCLEOTIDE SEQUENCE [LARGE SCALE MRNA]</scope>
    <source>
        <tissue>Embryo</tissue>
    </source>
</reference>
<gene>
    <name evidence="2" type="primary">abhd17b</name>
</gene>
<proteinExistence type="evidence at transcript level"/>
<evidence type="ECO:0000250" key="1">
    <source>
        <dbReference type="UniProtKB" id="O75608"/>
    </source>
</evidence>
<evidence type="ECO:0000250" key="2">
    <source>
        <dbReference type="UniProtKB" id="Q5VST6"/>
    </source>
</evidence>
<evidence type="ECO:0000250" key="3">
    <source>
        <dbReference type="UniProtKB" id="Q7M759"/>
    </source>
</evidence>
<evidence type="ECO:0000250" key="4">
    <source>
        <dbReference type="UniProtKB" id="Q96GS6"/>
    </source>
</evidence>
<evidence type="ECO:0000305" key="5"/>
<protein>
    <recommendedName>
        <fullName evidence="5">Alpha/beta hydrolase domain-containing protein 17B</fullName>
        <shortName evidence="2">Abhydrolase domain-containing protein 17B</shortName>
        <ecNumber evidence="2">3.1.2.22</ecNumber>
    </recommendedName>
</protein>
<organism>
    <name type="scientific">Xenopus tropicalis</name>
    <name type="common">Western clawed frog</name>
    <name type="synonym">Silurana tropicalis</name>
    <dbReference type="NCBI Taxonomy" id="8364"/>
    <lineage>
        <taxon>Eukaryota</taxon>
        <taxon>Metazoa</taxon>
        <taxon>Chordata</taxon>
        <taxon>Craniata</taxon>
        <taxon>Vertebrata</taxon>
        <taxon>Euteleostomi</taxon>
        <taxon>Amphibia</taxon>
        <taxon>Batrachia</taxon>
        <taxon>Anura</taxon>
        <taxon>Pipoidea</taxon>
        <taxon>Pipidae</taxon>
        <taxon>Xenopodinae</taxon>
        <taxon>Xenopus</taxon>
        <taxon>Silurana</taxon>
    </lineage>
</organism>
<comment type="function">
    <text evidence="3">Hydrolyzes fatty acids from S-acylated cysteine residues in proteins.</text>
</comment>
<comment type="catalytic activity">
    <reaction evidence="3">
        <text>S-hexadecanoyl-L-cysteinyl-[protein] + H2O = L-cysteinyl-[protein] + hexadecanoate + H(+)</text>
        <dbReference type="Rhea" id="RHEA:19233"/>
        <dbReference type="Rhea" id="RHEA-COMP:10131"/>
        <dbReference type="Rhea" id="RHEA-COMP:11032"/>
        <dbReference type="ChEBI" id="CHEBI:7896"/>
        <dbReference type="ChEBI" id="CHEBI:15377"/>
        <dbReference type="ChEBI" id="CHEBI:15378"/>
        <dbReference type="ChEBI" id="CHEBI:29950"/>
        <dbReference type="ChEBI" id="CHEBI:74151"/>
        <dbReference type="EC" id="3.1.2.22"/>
    </reaction>
</comment>
<comment type="subcellular location">
    <subcellularLocation>
        <location evidence="3">Cell membrane</location>
        <topology evidence="3">Lipid-anchor</topology>
        <orientation evidence="3">Cytoplasmic side</orientation>
    </subcellularLocation>
    <subcellularLocation>
        <location evidence="3">Recycling endosome membrane</location>
        <topology evidence="3">Lipid-anchor</topology>
        <orientation evidence="3">Cytoplasmic side</orientation>
    </subcellularLocation>
    <subcellularLocation>
        <location evidence="3">Cell projection</location>
        <location evidence="3">Dendritic spine</location>
    </subcellularLocation>
    <subcellularLocation>
        <location evidence="3">Postsynaptic density membrane</location>
    </subcellularLocation>
</comment>
<comment type="PTM">
    <text evidence="3">Palmitoylated on cysteine residues located in a cysteine cluster at the N-terminus which promotes membrane localization.</text>
</comment>
<comment type="similarity">
    <text evidence="5">Belongs to the AB hydrolase superfamily. ABHD17 family.</text>
</comment>
<keyword id="KW-1003">Cell membrane</keyword>
<keyword id="KW-0966">Cell projection</keyword>
<keyword id="KW-0967">Endosome</keyword>
<keyword id="KW-0378">Hydrolase</keyword>
<keyword id="KW-0449">Lipoprotein</keyword>
<keyword id="KW-0472">Membrane</keyword>
<keyword id="KW-0564">Palmitate</keyword>
<keyword id="KW-0628">Postsynaptic cell membrane</keyword>
<keyword id="KW-1185">Reference proteome</keyword>
<keyword id="KW-0770">Synapse</keyword>
<feature type="chain" id="PRO_0000281116" description="Alpha/beta hydrolase domain-containing protein 17B">
    <location>
        <begin position="1"/>
        <end position="288"/>
    </location>
</feature>
<feature type="active site" description="Charge relay system" evidence="4">
    <location>
        <position position="170"/>
    </location>
</feature>
<feature type="active site" description="Charge relay system" evidence="1">
    <location>
        <position position="235"/>
    </location>
</feature>
<feature type="active site" description="Charge relay system" evidence="1">
    <location>
        <position position="264"/>
    </location>
</feature>